<feature type="chain" id="PRO_1000125564" description="Glycine--tRNA ligase alpha subunit">
    <location>
        <begin position="1"/>
        <end position="304"/>
    </location>
</feature>
<reference key="1">
    <citation type="submission" date="2009-02" db="EMBL/GenBank/DDBJ databases">
        <title>Vibrio splendidus str. LGP32 complete genome.</title>
        <authorList>
            <person name="Mazel D."/>
            <person name="Le Roux F."/>
        </authorList>
    </citation>
    <scope>NUCLEOTIDE SEQUENCE [LARGE SCALE GENOMIC DNA]</scope>
    <source>
        <strain>LGP32</strain>
    </source>
</reference>
<gene>
    <name evidence="1" type="primary">glyQ</name>
    <name type="ordered locus">VS_0033</name>
</gene>
<keyword id="KW-0030">Aminoacyl-tRNA synthetase</keyword>
<keyword id="KW-0067">ATP-binding</keyword>
<keyword id="KW-0963">Cytoplasm</keyword>
<keyword id="KW-0436">Ligase</keyword>
<keyword id="KW-0547">Nucleotide-binding</keyword>
<keyword id="KW-0648">Protein biosynthesis</keyword>
<dbReference type="EC" id="6.1.1.14" evidence="1"/>
<dbReference type="EMBL" id="FM954972">
    <property type="protein sequence ID" value="CAV17090.1"/>
    <property type="molecule type" value="Genomic_DNA"/>
</dbReference>
<dbReference type="SMR" id="B7VGK7"/>
<dbReference type="STRING" id="575788.VS_0033"/>
<dbReference type="KEGG" id="vsp:VS_0033"/>
<dbReference type="eggNOG" id="COG0752">
    <property type="taxonomic scope" value="Bacteria"/>
</dbReference>
<dbReference type="HOGENOM" id="CLU_057066_1_0_6"/>
<dbReference type="Proteomes" id="UP000009100">
    <property type="component" value="Chromosome 1"/>
</dbReference>
<dbReference type="GO" id="GO:0005829">
    <property type="term" value="C:cytosol"/>
    <property type="evidence" value="ECO:0007669"/>
    <property type="project" value="TreeGrafter"/>
</dbReference>
<dbReference type="GO" id="GO:0005524">
    <property type="term" value="F:ATP binding"/>
    <property type="evidence" value="ECO:0007669"/>
    <property type="project" value="UniProtKB-UniRule"/>
</dbReference>
<dbReference type="GO" id="GO:0004820">
    <property type="term" value="F:glycine-tRNA ligase activity"/>
    <property type="evidence" value="ECO:0007669"/>
    <property type="project" value="UniProtKB-UniRule"/>
</dbReference>
<dbReference type="GO" id="GO:0006426">
    <property type="term" value="P:glycyl-tRNA aminoacylation"/>
    <property type="evidence" value="ECO:0007669"/>
    <property type="project" value="UniProtKB-UniRule"/>
</dbReference>
<dbReference type="CDD" id="cd00733">
    <property type="entry name" value="GlyRS_alpha_core"/>
    <property type="match status" value="1"/>
</dbReference>
<dbReference type="FunFam" id="3.30.930.10:FF:000006">
    <property type="entry name" value="Glycine--tRNA ligase alpha subunit"/>
    <property type="match status" value="1"/>
</dbReference>
<dbReference type="Gene3D" id="3.30.930.10">
    <property type="entry name" value="Bira Bifunctional Protein, Domain 2"/>
    <property type="match status" value="1"/>
</dbReference>
<dbReference type="Gene3D" id="1.20.58.180">
    <property type="entry name" value="Class II aaRS and biotin synthetases, domain 2"/>
    <property type="match status" value="1"/>
</dbReference>
<dbReference type="HAMAP" id="MF_00254">
    <property type="entry name" value="Gly_tRNA_synth_alpha"/>
    <property type="match status" value="1"/>
</dbReference>
<dbReference type="InterPro" id="IPR045864">
    <property type="entry name" value="aa-tRNA-synth_II/BPL/LPL"/>
</dbReference>
<dbReference type="InterPro" id="IPR006194">
    <property type="entry name" value="Gly-tRNA-synth_heterodimer"/>
</dbReference>
<dbReference type="InterPro" id="IPR002310">
    <property type="entry name" value="Gly-tRNA_ligase_asu"/>
</dbReference>
<dbReference type="NCBIfam" id="TIGR00388">
    <property type="entry name" value="glyQ"/>
    <property type="match status" value="1"/>
</dbReference>
<dbReference type="NCBIfam" id="NF006827">
    <property type="entry name" value="PRK09348.1"/>
    <property type="match status" value="1"/>
</dbReference>
<dbReference type="PANTHER" id="PTHR30075:SF2">
    <property type="entry name" value="GLYCINE--TRNA LIGASE, CHLOROPLASTIC_MITOCHONDRIAL 2"/>
    <property type="match status" value="1"/>
</dbReference>
<dbReference type="PANTHER" id="PTHR30075">
    <property type="entry name" value="GLYCYL-TRNA SYNTHETASE"/>
    <property type="match status" value="1"/>
</dbReference>
<dbReference type="Pfam" id="PF02091">
    <property type="entry name" value="tRNA-synt_2e"/>
    <property type="match status" value="1"/>
</dbReference>
<dbReference type="PRINTS" id="PR01044">
    <property type="entry name" value="TRNASYNTHGA"/>
</dbReference>
<dbReference type="SUPFAM" id="SSF55681">
    <property type="entry name" value="Class II aaRS and biotin synthetases"/>
    <property type="match status" value="1"/>
</dbReference>
<dbReference type="PROSITE" id="PS50861">
    <property type="entry name" value="AA_TRNA_LIGASE_II_GLYAB"/>
    <property type="match status" value="1"/>
</dbReference>
<name>SYGA_VIBA3</name>
<protein>
    <recommendedName>
        <fullName evidence="1">Glycine--tRNA ligase alpha subunit</fullName>
        <ecNumber evidence="1">6.1.1.14</ecNumber>
    </recommendedName>
    <alternativeName>
        <fullName evidence="1">Glycyl-tRNA synthetase alpha subunit</fullName>
        <shortName evidence="1">GlyRS</shortName>
    </alternativeName>
</protein>
<accession>B7VGK7</accession>
<organism>
    <name type="scientific">Vibrio atlanticus (strain LGP32)</name>
    <name type="common">Vibrio splendidus (strain Mel32)</name>
    <dbReference type="NCBI Taxonomy" id="575788"/>
    <lineage>
        <taxon>Bacteria</taxon>
        <taxon>Pseudomonadati</taxon>
        <taxon>Pseudomonadota</taxon>
        <taxon>Gammaproteobacteria</taxon>
        <taxon>Vibrionales</taxon>
        <taxon>Vibrionaceae</taxon>
        <taxon>Vibrio</taxon>
    </lineage>
</organism>
<comment type="catalytic activity">
    <reaction evidence="1">
        <text>tRNA(Gly) + glycine + ATP = glycyl-tRNA(Gly) + AMP + diphosphate</text>
        <dbReference type="Rhea" id="RHEA:16013"/>
        <dbReference type="Rhea" id="RHEA-COMP:9664"/>
        <dbReference type="Rhea" id="RHEA-COMP:9683"/>
        <dbReference type="ChEBI" id="CHEBI:30616"/>
        <dbReference type="ChEBI" id="CHEBI:33019"/>
        <dbReference type="ChEBI" id="CHEBI:57305"/>
        <dbReference type="ChEBI" id="CHEBI:78442"/>
        <dbReference type="ChEBI" id="CHEBI:78522"/>
        <dbReference type="ChEBI" id="CHEBI:456215"/>
        <dbReference type="EC" id="6.1.1.14"/>
    </reaction>
</comment>
<comment type="subunit">
    <text evidence="1">Tetramer of two alpha and two beta subunits.</text>
</comment>
<comment type="subcellular location">
    <subcellularLocation>
        <location evidence="1">Cytoplasm</location>
    </subcellularLocation>
</comment>
<comment type="similarity">
    <text evidence="1">Belongs to the class-II aminoacyl-tRNA synthetase family.</text>
</comment>
<evidence type="ECO:0000255" key="1">
    <source>
        <dbReference type="HAMAP-Rule" id="MF_00254"/>
    </source>
</evidence>
<proteinExistence type="inferred from homology"/>
<sequence length="304" mass="34848">MQKYDIKTFQGMILALQDYWAQNGCTIVQPLDMEVGAGTSHPMTCLRALGPEPMSTAYVQPSRRPTDGRYGENPNRLQHYYQFQVALKPSPDNIQELYLGSLEVLGVDPLVHDIRFVEDNWENPTLGAWGLGWEVWLNGMEVTQFTYFQQVGGLECKPVTGEITYGIERLAMYIQEVDSVYDLVWNVAPDGSNVTYGDIFHQNEVEQSTYNFEHADVDFLFTFFDQCEKECKELLELEKPLPLPAYERILKAGHAFNILDARKAISVTERQRYILRIRNLTKAVAEAYYASREALGFPMCKKDK</sequence>